<reference key="1">
    <citation type="journal article" date="2004" name="Proc. Natl. Acad. Sci. U.S.A.">
        <title>Complete genomes of two clinical Staphylococcus aureus strains: evidence for the rapid evolution of virulence and drug resistance.</title>
        <authorList>
            <person name="Holden M.T.G."/>
            <person name="Feil E.J."/>
            <person name="Lindsay J.A."/>
            <person name="Peacock S.J."/>
            <person name="Day N.P.J."/>
            <person name="Enright M.C."/>
            <person name="Foster T.J."/>
            <person name="Moore C.E."/>
            <person name="Hurst L."/>
            <person name="Atkin R."/>
            <person name="Barron A."/>
            <person name="Bason N."/>
            <person name="Bentley S.D."/>
            <person name="Chillingworth C."/>
            <person name="Chillingworth T."/>
            <person name="Churcher C."/>
            <person name="Clark L."/>
            <person name="Corton C."/>
            <person name="Cronin A."/>
            <person name="Doggett J."/>
            <person name="Dowd L."/>
            <person name="Feltwell T."/>
            <person name="Hance Z."/>
            <person name="Harris B."/>
            <person name="Hauser H."/>
            <person name="Holroyd S."/>
            <person name="Jagels K."/>
            <person name="James K.D."/>
            <person name="Lennard N."/>
            <person name="Line A."/>
            <person name="Mayes R."/>
            <person name="Moule S."/>
            <person name="Mungall K."/>
            <person name="Ormond D."/>
            <person name="Quail M.A."/>
            <person name="Rabbinowitsch E."/>
            <person name="Rutherford K.M."/>
            <person name="Sanders M."/>
            <person name="Sharp S."/>
            <person name="Simmonds M."/>
            <person name="Stevens K."/>
            <person name="Whitehead S."/>
            <person name="Barrell B.G."/>
            <person name="Spratt B.G."/>
            <person name="Parkhill J."/>
        </authorList>
    </citation>
    <scope>NUCLEOTIDE SEQUENCE [LARGE SCALE GENOMIC DNA]</scope>
    <source>
        <strain>MSSA476</strain>
    </source>
</reference>
<evidence type="ECO:0000255" key="1">
    <source>
        <dbReference type="HAMAP-Rule" id="MF_01897"/>
    </source>
</evidence>
<evidence type="ECO:0000255" key="2">
    <source>
        <dbReference type="PROSITE-ProRule" id="PRU01384"/>
    </source>
</evidence>
<evidence type="ECO:0000256" key="3">
    <source>
        <dbReference type="SAM" id="MobiDB-lite"/>
    </source>
</evidence>
<accession>Q6GD84</accession>
<dbReference type="EC" id="5.6.2.2" evidence="1"/>
<dbReference type="EMBL" id="BX571857">
    <property type="protein sequence ID" value="CAG41778.1"/>
    <property type="molecule type" value="Genomic_DNA"/>
</dbReference>
<dbReference type="RefSeq" id="WP_000819084.1">
    <property type="nucleotide sequence ID" value="NC_002953.3"/>
</dbReference>
<dbReference type="SMR" id="Q6GD84"/>
<dbReference type="KEGG" id="sas:SAS0006"/>
<dbReference type="HOGENOM" id="CLU_002977_6_1_9"/>
<dbReference type="GO" id="GO:0005694">
    <property type="term" value="C:chromosome"/>
    <property type="evidence" value="ECO:0007669"/>
    <property type="project" value="InterPro"/>
</dbReference>
<dbReference type="GO" id="GO:0005737">
    <property type="term" value="C:cytoplasm"/>
    <property type="evidence" value="ECO:0007669"/>
    <property type="project" value="UniProtKB-SubCell"/>
</dbReference>
<dbReference type="GO" id="GO:0009330">
    <property type="term" value="C:DNA topoisomerase type II (double strand cut, ATP-hydrolyzing) complex"/>
    <property type="evidence" value="ECO:0007669"/>
    <property type="project" value="TreeGrafter"/>
</dbReference>
<dbReference type="GO" id="GO:0005524">
    <property type="term" value="F:ATP binding"/>
    <property type="evidence" value="ECO:0007669"/>
    <property type="project" value="UniProtKB-UniRule"/>
</dbReference>
<dbReference type="GO" id="GO:0003677">
    <property type="term" value="F:DNA binding"/>
    <property type="evidence" value="ECO:0007669"/>
    <property type="project" value="UniProtKB-UniRule"/>
</dbReference>
<dbReference type="GO" id="GO:0034335">
    <property type="term" value="F:DNA negative supercoiling activity"/>
    <property type="evidence" value="ECO:0007669"/>
    <property type="project" value="UniProtKB-ARBA"/>
</dbReference>
<dbReference type="GO" id="GO:0006265">
    <property type="term" value="P:DNA topological change"/>
    <property type="evidence" value="ECO:0007669"/>
    <property type="project" value="UniProtKB-UniRule"/>
</dbReference>
<dbReference type="GO" id="GO:0006261">
    <property type="term" value="P:DNA-templated DNA replication"/>
    <property type="evidence" value="ECO:0007669"/>
    <property type="project" value="UniProtKB-UniRule"/>
</dbReference>
<dbReference type="GO" id="GO:0046677">
    <property type="term" value="P:response to antibiotic"/>
    <property type="evidence" value="ECO:0007669"/>
    <property type="project" value="UniProtKB-KW"/>
</dbReference>
<dbReference type="CDD" id="cd00187">
    <property type="entry name" value="TOP4c"/>
    <property type="match status" value="1"/>
</dbReference>
<dbReference type="FunFam" id="1.10.268.10:FF:000001">
    <property type="entry name" value="DNA gyrase subunit A"/>
    <property type="match status" value="1"/>
</dbReference>
<dbReference type="FunFam" id="2.120.10.90:FF:000004">
    <property type="entry name" value="DNA gyrase subunit A"/>
    <property type="match status" value="1"/>
</dbReference>
<dbReference type="FunFam" id="3.30.1360.40:FF:000002">
    <property type="entry name" value="DNA gyrase subunit A"/>
    <property type="match status" value="1"/>
</dbReference>
<dbReference type="FunFam" id="3.90.199.10:FF:000001">
    <property type="entry name" value="DNA gyrase subunit A"/>
    <property type="match status" value="1"/>
</dbReference>
<dbReference type="Gene3D" id="3.30.1360.40">
    <property type="match status" value="1"/>
</dbReference>
<dbReference type="Gene3D" id="2.120.10.90">
    <property type="entry name" value="DNA gyrase/topoisomerase IV, subunit A, C-terminal"/>
    <property type="match status" value="1"/>
</dbReference>
<dbReference type="Gene3D" id="3.90.199.10">
    <property type="entry name" value="Topoisomerase II, domain 5"/>
    <property type="match status" value="1"/>
</dbReference>
<dbReference type="Gene3D" id="1.10.268.10">
    <property type="entry name" value="Topoisomerase, domain 3"/>
    <property type="match status" value="1"/>
</dbReference>
<dbReference type="HAMAP" id="MF_01897">
    <property type="entry name" value="GyrA"/>
    <property type="match status" value="1"/>
</dbReference>
<dbReference type="InterPro" id="IPR005743">
    <property type="entry name" value="GyrA"/>
</dbReference>
<dbReference type="InterPro" id="IPR006691">
    <property type="entry name" value="GyrA/parC_rep"/>
</dbReference>
<dbReference type="InterPro" id="IPR035516">
    <property type="entry name" value="Gyrase/topoIV_suA_C"/>
</dbReference>
<dbReference type="InterPro" id="IPR013760">
    <property type="entry name" value="Topo_IIA-like_dom_sf"/>
</dbReference>
<dbReference type="InterPro" id="IPR013758">
    <property type="entry name" value="Topo_IIA_A/C_ab"/>
</dbReference>
<dbReference type="InterPro" id="IPR013757">
    <property type="entry name" value="Topo_IIA_A_a_sf"/>
</dbReference>
<dbReference type="InterPro" id="IPR002205">
    <property type="entry name" value="Topo_IIA_dom_A"/>
</dbReference>
<dbReference type="InterPro" id="IPR050220">
    <property type="entry name" value="Type_II_DNA_Topoisomerases"/>
</dbReference>
<dbReference type="NCBIfam" id="TIGR01063">
    <property type="entry name" value="gyrA"/>
    <property type="match status" value="1"/>
</dbReference>
<dbReference type="NCBIfam" id="NF004043">
    <property type="entry name" value="PRK05560.1"/>
    <property type="match status" value="1"/>
</dbReference>
<dbReference type="NCBIfam" id="NF004044">
    <property type="entry name" value="PRK05561.1"/>
    <property type="match status" value="1"/>
</dbReference>
<dbReference type="PANTHER" id="PTHR43493:SF5">
    <property type="entry name" value="DNA GYRASE SUBUNIT A, CHLOROPLASTIC_MITOCHONDRIAL"/>
    <property type="match status" value="1"/>
</dbReference>
<dbReference type="PANTHER" id="PTHR43493">
    <property type="entry name" value="DNA GYRASE/TOPOISOMERASE SUBUNIT A"/>
    <property type="match status" value="1"/>
</dbReference>
<dbReference type="Pfam" id="PF03989">
    <property type="entry name" value="DNA_gyraseA_C"/>
    <property type="match status" value="6"/>
</dbReference>
<dbReference type="Pfam" id="PF00521">
    <property type="entry name" value="DNA_topoisoIV"/>
    <property type="match status" value="1"/>
</dbReference>
<dbReference type="SMART" id="SM00434">
    <property type="entry name" value="TOP4c"/>
    <property type="match status" value="1"/>
</dbReference>
<dbReference type="SUPFAM" id="SSF101904">
    <property type="entry name" value="GyrA/ParC C-terminal domain-like"/>
    <property type="match status" value="1"/>
</dbReference>
<dbReference type="SUPFAM" id="SSF56719">
    <property type="entry name" value="Type II DNA topoisomerase"/>
    <property type="match status" value="1"/>
</dbReference>
<dbReference type="PROSITE" id="PS52040">
    <property type="entry name" value="TOPO_IIA"/>
    <property type="match status" value="1"/>
</dbReference>
<sequence length="887" mass="99351">MAELPQSRINERNITSEMRESFLDYAMSVIVARALPDVRDGLKPVHRRILYGLNEQGMTPDKSYKKSARIVGDVMGKYHPHGDSSIYEAMVRMAQDFSYRYPLVDGQGNFGSMDGDGAAAMRYTEARMTKITLELLRDINKDTIDFIDNYDGNEREPSVLPARFPNLLANGASGIAVGMATNIPPHNLTELINGVLSLSKNPDISIAELMEDIEGPDFPTAGLILGKSGIRRAYETGRGSIQMRSRAVIEERGGGRQRIVVTEIPFQVNKARMIEKIAELVRDKKIDGITDLRDETSLRTGVRVVIDVRKDANASVILNNLYKQTPLQTSFGVNMIALVNGRPKLINLKEALVHYLEHQKTVVRRRTQYNLRKAKDRAHILEGLRIALDHIDEIISTIRESDTDKVAMESLQQRFKLSEKQAQAILDMRLRRLTGLERDKIEAEYNELLNYISELEAILADEEVLLQLVRDELTEIRDRFGDDRRTEIQLGGFEDLEDEDLIPEEQIVITLSHNNYIKRLPVSTYRAQNRGGRGVQGMNTLEEDFVSQLVTLSTHDHVLFFTNKGRVYKLKGYEVPELSRQSKGIPVVNAIELENDEVISTMIAVKDLESEDNFLVFATKRGVVKRSALSNFSRINRNGKIAISFREDDELIAVRLTSGQEDILIGTSHASLIRFPESTLRPLGRTATGVKGITLREGDEVVGLDVAHANSVDEVLVVTENGYGKRTPVNDYRLSNRGGKGIKTATITERNGNVVCITTVTGEEDLMIVTNAGVIIRLDVADISQNGRAAQGVRLIRLGDDQFVSTVAKVKEDAEDETNEDEQSTSTVSEDGTEQQREAVVNDETPGNAIHTEVIDSEENDEDGRIEVRQDFMDRVEEDIQQSSDEE</sequence>
<comment type="function">
    <text evidence="1">A type II topoisomerase that negatively supercoils closed circular double-stranded (ds) DNA in an ATP-dependent manner to modulate DNA topology and maintain chromosomes in an underwound state. Negative supercoiling favors strand separation, and DNA replication, transcription, recombination and repair, all of which involve strand separation. Also able to catalyze the interconversion of other topological isomers of dsDNA rings, including catenanes and knotted rings. Type II topoisomerases break and join 2 DNA strands simultaneously in an ATP-dependent manner.</text>
</comment>
<comment type="catalytic activity">
    <reaction evidence="1">
        <text>ATP-dependent breakage, passage and rejoining of double-stranded DNA.</text>
        <dbReference type="EC" id="5.6.2.2"/>
    </reaction>
</comment>
<comment type="subunit">
    <text evidence="1">Heterotetramer, composed of two GyrA and two GyrB chains. In the heterotetramer, GyrA contains the active site tyrosine that forms a transient covalent intermediate with DNA, while GyrB binds cofactors and catalyzes ATP hydrolysis.</text>
</comment>
<comment type="subcellular location">
    <subcellularLocation>
        <location evidence="1">Cytoplasm</location>
    </subcellularLocation>
</comment>
<comment type="miscellaneous">
    <text evidence="1">Few gyrases are as efficient as E.coli at forming negative supercoils. Not all organisms have 2 type II topoisomerases; in organisms with a single type II topoisomerase this enzyme also has to decatenate newly replicated chromosomes.</text>
</comment>
<comment type="similarity">
    <text evidence="1">Belongs to the type II topoisomerase GyrA/ParC subunit family.</text>
</comment>
<feature type="chain" id="PRO_0000145256" description="DNA gyrase subunit A">
    <location>
        <begin position="1"/>
        <end position="887"/>
    </location>
</feature>
<feature type="domain" description="Topo IIA-type catalytic" evidence="2">
    <location>
        <begin position="35"/>
        <end position="501"/>
    </location>
</feature>
<feature type="region of interest" description="Disordered" evidence="3">
    <location>
        <begin position="811"/>
        <end position="865"/>
    </location>
</feature>
<feature type="short sequence motif" description="GyrA-box" evidence="1">
    <location>
        <begin position="528"/>
        <end position="534"/>
    </location>
</feature>
<feature type="compositionally biased region" description="Acidic residues" evidence="3">
    <location>
        <begin position="813"/>
        <end position="823"/>
    </location>
</feature>
<feature type="active site" description="O-(5'-phospho-DNA)-tyrosine intermediate" evidence="1">
    <location>
        <position position="123"/>
    </location>
</feature>
<keyword id="KW-0046">Antibiotic resistance</keyword>
<keyword id="KW-0067">ATP-binding</keyword>
<keyword id="KW-0963">Cytoplasm</keyword>
<keyword id="KW-0238">DNA-binding</keyword>
<keyword id="KW-0413">Isomerase</keyword>
<keyword id="KW-0547">Nucleotide-binding</keyword>
<keyword id="KW-0799">Topoisomerase</keyword>
<organism>
    <name type="scientific">Staphylococcus aureus (strain MSSA476)</name>
    <dbReference type="NCBI Taxonomy" id="282459"/>
    <lineage>
        <taxon>Bacteria</taxon>
        <taxon>Bacillati</taxon>
        <taxon>Bacillota</taxon>
        <taxon>Bacilli</taxon>
        <taxon>Bacillales</taxon>
        <taxon>Staphylococcaceae</taxon>
        <taxon>Staphylococcus</taxon>
    </lineage>
</organism>
<proteinExistence type="inferred from homology"/>
<protein>
    <recommendedName>
        <fullName evidence="1">DNA gyrase subunit A</fullName>
        <ecNumber evidence="1">5.6.2.2</ecNumber>
    </recommendedName>
</protein>
<name>GYRA_STAAS</name>
<gene>
    <name evidence="1" type="primary">gyrA</name>
    <name type="ordered locus">SAS0006</name>
</gene>